<dbReference type="EMBL" id="U20136">
    <property type="protein sequence ID" value="AAA93216.1"/>
    <property type="molecule type" value="Genomic_DNA"/>
</dbReference>
<dbReference type="SMR" id="P84316"/>
<dbReference type="EnsemblMetazoa" id="XM_047167620.1">
    <property type="protein sequence ID" value="XP_047023576.1"/>
    <property type="gene ID" value="LOC124632616"/>
</dbReference>
<dbReference type="GO" id="GO:0005737">
    <property type="term" value="C:cytoplasm"/>
    <property type="evidence" value="ECO:0007669"/>
    <property type="project" value="UniProtKB-SubCell"/>
</dbReference>
<dbReference type="GO" id="GO:0005525">
    <property type="term" value="F:GTP binding"/>
    <property type="evidence" value="ECO:0007669"/>
    <property type="project" value="UniProtKB-KW"/>
</dbReference>
<dbReference type="GO" id="GO:0003924">
    <property type="term" value="F:GTPase activity"/>
    <property type="evidence" value="ECO:0007669"/>
    <property type="project" value="InterPro"/>
</dbReference>
<dbReference type="GO" id="GO:0003746">
    <property type="term" value="F:translation elongation factor activity"/>
    <property type="evidence" value="ECO:0007669"/>
    <property type="project" value="UniProtKB-KW"/>
</dbReference>
<dbReference type="CDD" id="cd01883">
    <property type="entry name" value="EF1_alpha"/>
    <property type="match status" value="1"/>
</dbReference>
<dbReference type="CDD" id="cd03693">
    <property type="entry name" value="EF1_alpha_II"/>
    <property type="match status" value="1"/>
</dbReference>
<dbReference type="CDD" id="cd03705">
    <property type="entry name" value="EF1_alpha_III"/>
    <property type="match status" value="1"/>
</dbReference>
<dbReference type="FunFam" id="2.40.30.10:FF:000003">
    <property type="entry name" value="Elongation factor 1-alpha"/>
    <property type="match status" value="1"/>
</dbReference>
<dbReference type="FunFam" id="2.40.30.10:FF:000005">
    <property type="entry name" value="Elongation factor 1-alpha"/>
    <property type="match status" value="1"/>
</dbReference>
<dbReference type="FunFam" id="3.40.50.300:FF:000090">
    <property type="entry name" value="Elongation factor 1-alpha"/>
    <property type="match status" value="1"/>
</dbReference>
<dbReference type="Gene3D" id="3.40.50.300">
    <property type="entry name" value="P-loop containing nucleotide triphosphate hydrolases"/>
    <property type="match status" value="1"/>
</dbReference>
<dbReference type="Gene3D" id="2.40.30.10">
    <property type="entry name" value="Translation factors"/>
    <property type="match status" value="2"/>
</dbReference>
<dbReference type="InterPro" id="IPR004161">
    <property type="entry name" value="EFTu-like_2"/>
</dbReference>
<dbReference type="InterPro" id="IPR031157">
    <property type="entry name" value="G_TR_CS"/>
</dbReference>
<dbReference type="InterPro" id="IPR054696">
    <property type="entry name" value="GTP-eEF1A_C"/>
</dbReference>
<dbReference type="InterPro" id="IPR027417">
    <property type="entry name" value="P-loop_NTPase"/>
</dbReference>
<dbReference type="InterPro" id="IPR000795">
    <property type="entry name" value="T_Tr_GTP-bd_dom"/>
</dbReference>
<dbReference type="InterPro" id="IPR050100">
    <property type="entry name" value="TRAFAC_GTPase_members"/>
</dbReference>
<dbReference type="InterPro" id="IPR009000">
    <property type="entry name" value="Transl_B-barrel_sf"/>
</dbReference>
<dbReference type="InterPro" id="IPR009001">
    <property type="entry name" value="Transl_elong_EF1A/Init_IF2_C"/>
</dbReference>
<dbReference type="InterPro" id="IPR004539">
    <property type="entry name" value="Transl_elong_EF1A_euk/arc"/>
</dbReference>
<dbReference type="NCBIfam" id="TIGR00483">
    <property type="entry name" value="EF-1_alpha"/>
    <property type="match status" value="1"/>
</dbReference>
<dbReference type="NCBIfam" id="NF008969">
    <property type="entry name" value="PRK12317.1"/>
    <property type="match status" value="1"/>
</dbReference>
<dbReference type="PANTHER" id="PTHR23115">
    <property type="entry name" value="TRANSLATION FACTOR"/>
    <property type="match status" value="1"/>
</dbReference>
<dbReference type="Pfam" id="PF22594">
    <property type="entry name" value="GTP-eEF1A_C"/>
    <property type="match status" value="1"/>
</dbReference>
<dbReference type="Pfam" id="PF00009">
    <property type="entry name" value="GTP_EFTU"/>
    <property type="match status" value="1"/>
</dbReference>
<dbReference type="Pfam" id="PF03144">
    <property type="entry name" value="GTP_EFTU_D2"/>
    <property type="match status" value="1"/>
</dbReference>
<dbReference type="PRINTS" id="PR00315">
    <property type="entry name" value="ELONGATNFCT"/>
</dbReference>
<dbReference type="SUPFAM" id="SSF50465">
    <property type="entry name" value="EF-Tu/eEF-1alpha/eIF2-gamma C-terminal domain"/>
    <property type="match status" value="1"/>
</dbReference>
<dbReference type="SUPFAM" id="SSF52540">
    <property type="entry name" value="P-loop containing nucleoside triphosphate hydrolases"/>
    <property type="match status" value="1"/>
</dbReference>
<dbReference type="SUPFAM" id="SSF50447">
    <property type="entry name" value="Translation proteins"/>
    <property type="match status" value="1"/>
</dbReference>
<dbReference type="PROSITE" id="PS00301">
    <property type="entry name" value="G_TR_1"/>
    <property type="match status" value="1"/>
</dbReference>
<dbReference type="PROSITE" id="PS51722">
    <property type="entry name" value="G_TR_2"/>
    <property type="match status" value="1"/>
</dbReference>
<comment type="function">
    <text>This protein promotes the GTP-dependent binding of aminoacyl-tRNA to the A-site of ribosomes during protein biosynthesis.</text>
</comment>
<comment type="subcellular location">
    <subcellularLocation>
        <location>Cytoplasm</location>
    </subcellularLocation>
</comment>
<comment type="similarity">
    <text evidence="2">Belongs to the TRAFAC class translation factor GTPase superfamily. Classic translation factor GTPase family. EF-Tu/EF-1A subfamily.</text>
</comment>
<protein>
    <recommendedName>
        <fullName>Elongation factor 1-alpha</fullName>
        <shortName>EF-1-alpha</shortName>
    </recommendedName>
</protein>
<evidence type="ECO:0000250" key="1"/>
<evidence type="ECO:0000255" key="2">
    <source>
        <dbReference type="PROSITE-ProRule" id="PRU01059"/>
    </source>
</evidence>
<organism>
    <name type="scientific">Helicoverpa zea</name>
    <name type="common">Corn earworm moth</name>
    <name type="synonym">Heliothis zea</name>
    <dbReference type="NCBI Taxonomy" id="7113"/>
    <lineage>
        <taxon>Eukaryota</taxon>
        <taxon>Metazoa</taxon>
        <taxon>Ecdysozoa</taxon>
        <taxon>Arthropoda</taxon>
        <taxon>Hexapoda</taxon>
        <taxon>Insecta</taxon>
        <taxon>Pterygota</taxon>
        <taxon>Neoptera</taxon>
        <taxon>Endopterygota</taxon>
        <taxon>Lepidoptera</taxon>
        <taxon>Glossata</taxon>
        <taxon>Ditrysia</taxon>
        <taxon>Noctuoidea</taxon>
        <taxon>Noctuidae</taxon>
        <taxon>Heliothinae</taxon>
        <taxon>Helicoverpa</taxon>
    </lineage>
</organism>
<reference key="1">
    <citation type="journal article" date="1995" name="Mol. Biol. Evol.">
        <title>A highly conserved nuclear gene for low-level phylogenetics: elongation factor-1 alpha recovers morphology-based tree for heliothine moths.</title>
        <authorList>
            <person name="Cho S."/>
            <person name="Mitchell A."/>
            <person name="Regier J.C."/>
            <person name="Mitter C."/>
            <person name="Poole R.W."/>
            <person name="Friedlander T.P."/>
            <person name="Zhao S."/>
        </authorList>
    </citation>
    <scope>NUCLEOTIDE SEQUENCE [GENOMIC DNA]</scope>
</reference>
<feature type="chain" id="PRO_0000090913" description="Elongation factor 1-alpha">
    <location>
        <begin position="1" status="less than"/>
        <end position="413" status="greater than"/>
    </location>
</feature>
<feature type="domain" description="tr-type G" evidence="2">
    <location>
        <begin position="1" status="less than"/>
        <end position="228"/>
    </location>
</feature>
<feature type="binding site" evidence="1">
    <location>
        <begin position="1" status="less than"/>
        <end position="7"/>
    </location>
    <ligand>
        <name>GTP</name>
        <dbReference type="ChEBI" id="CHEBI:37565"/>
    </ligand>
</feature>
<feature type="binding site" evidence="1">
    <location>
        <begin position="77"/>
        <end position="81"/>
    </location>
    <ligand>
        <name>GTP</name>
        <dbReference type="ChEBI" id="CHEBI:37565"/>
    </ligand>
</feature>
<feature type="binding site" evidence="1">
    <location>
        <begin position="139"/>
        <end position="142"/>
    </location>
    <ligand>
        <name>GTP</name>
        <dbReference type="ChEBI" id="CHEBI:37565"/>
    </ligand>
</feature>
<feature type="modified residue" description="5-glutamyl glycerylphosphorylethanolamine" evidence="1">
    <location>
        <position position="287"/>
    </location>
</feature>
<feature type="modified residue" description="5-glutamyl glycerylphosphorylethanolamine" evidence="1">
    <location>
        <position position="360"/>
    </location>
</feature>
<feature type="non-terminal residue">
    <location>
        <position position="1"/>
    </location>
</feature>
<feature type="non-terminal residue">
    <location>
        <position position="413"/>
    </location>
</feature>
<name>EF1A_HELZE</name>
<accession>P84316</accession>
<accession>P55276</accession>
<keyword id="KW-0963">Cytoplasm</keyword>
<keyword id="KW-0251">Elongation factor</keyword>
<keyword id="KW-0342">GTP-binding</keyword>
<keyword id="KW-0547">Nucleotide-binding</keyword>
<keyword id="KW-0597">Phosphoprotein</keyword>
<keyword id="KW-0648">Protein biosynthesis</keyword>
<sequence>HVDSGKSTTTGHLIYKCGGIDKRTIEKFEKEAQEMGKGSFKYAWVLDKLKAERERGITIDIALWKFETAKYYVTIIDAPGHRDFIKNMITGTSQADCAVLIVAAGTGEFEAGISKNGQTREHALLAFTLGVKQLIVGVNKMDSTEPPYSESRFEEIKKEVSSYIKKIGYNPAAVAFVPISGWHGDNMLEASTKMPWFKGWNVERKEGKAEGKCLIEALDAILPPARPTDKALRLPLQDVYKIGGIGTVPVGRVETGILKPGTIVVFAPANITTEVKSVEMHHEALQEAVPGDNVGFNVKNVSVKELRRGYVAGDSKNNPPKGAADFTAQVIVLNHPGQISNGYTPVLDCHTAHIACKFAEIKEKVDRRTGKSTEDNPKSIKSGDAAIVNLVPSKPLCVESFQEFPPLGRFAVR</sequence>
<proteinExistence type="inferred from homology"/>